<dbReference type="EC" id="4.3.1.18" evidence="1"/>
<dbReference type="EMBL" id="CP001144">
    <property type="protein sequence ID" value="ACH75857.1"/>
    <property type="molecule type" value="Genomic_DNA"/>
</dbReference>
<dbReference type="RefSeq" id="WP_000427995.1">
    <property type="nucleotide sequence ID" value="NC_011205.1"/>
</dbReference>
<dbReference type="SMR" id="B5FMC1"/>
<dbReference type="KEGG" id="sed:SeD_A4190"/>
<dbReference type="HOGENOM" id="CLU_035707_0_0_6"/>
<dbReference type="Proteomes" id="UP000008322">
    <property type="component" value="Chromosome"/>
</dbReference>
<dbReference type="GO" id="GO:0008721">
    <property type="term" value="F:D-serine ammonia-lyase activity"/>
    <property type="evidence" value="ECO:0007669"/>
    <property type="project" value="UniProtKB-EC"/>
</dbReference>
<dbReference type="GO" id="GO:0016836">
    <property type="term" value="F:hydro-lyase activity"/>
    <property type="evidence" value="ECO:0007669"/>
    <property type="project" value="UniProtKB-UniRule"/>
</dbReference>
<dbReference type="GO" id="GO:0030170">
    <property type="term" value="F:pyridoxal phosphate binding"/>
    <property type="evidence" value="ECO:0007669"/>
    <property type="project" value="InterPro"/>
</dbReference>
<dbReference type="GO" id="GO:0036088">
    <property type="term" value="P:D-serine catabolic process"/>
    <property type="evidence" value="ECO:0007669"/>
    <property type="project" value="TreeGrafter"/>
</dbReference>
<dbReference type="GO" id="GO:0009097">
    <property type="term" value="P:isoleucine biosynthetic process"/>
    <property type="evidence" value="ECO:0007669"/>
    <property type="project" value="TreeGrafter"/>
</dbReference>
<dbReference type="CDD" id="cd06447">
    <property type="entry name" value="D-Ser-dehyd"/>
    <property type="match status" value="1"/>
</dbReference>
<dbReference type="FunFam" id="3.40.50.1100:FF:000018">
    <property type="entry name" value="D-serine dehydratase"/>
    <property type="match status" value="1"/>
</dbReference>
<dbReference type="Gene3D" id="3.40.50.1100">
    <property type="match status" value="2"/>
</dbReference>
<dbReference type="HAMAP" id="MF_01030">
    <property type="entry name" value="D_Ser_dehydrat"/>
    <property type="match status" value="1"/>
</dbReference>
<dbReference type="InterPro" id="IPR011780">
    <property type="entry name" value="D_Ser_am_lyase"/>
</dbReference>
<dbReference type="InterPro" id="IPR050147">
    <property type="entry name" value="Ser/Thr_Dehydratase"/>
</dbReference>
<dbReference type="InterPro" id="IPR000634">
    <property type="entry name" value="Ser/Thr_deHydtase_PyrdxlP-BS"/>
</dbReference>
<dbReference type="InterPro" id="IPR001926">
    <property type="entry name" value="TrpB-like_PALP"/>
</dbReference>
<dbReference type="InterPro" id="IPR036052">
    <property type="entry name" value="TrpB-like_PALP_sf"/>
</dbReference>
<dbReference type="NCBIfam" id="TIGR02035">
    <property type="entry name" value="D_Ser_am_lyase"/>
    <property type="match status" value="1"/>
</dbReference>
<dbReference type="NCBIfam" id="NF002823">
    <property type="entry name" value="PRK02991.1"/>
    <property type="match status" value="1"/>
</dbReference>
<dbReference type="PANTHER" id="PTHR48078:SF9">
    <property type="entry name" value="D-SERINE DEHYDRATASE"/>
    <property type="match status" value="1"/>
</dbReference>
<dbReference type="PANTHER" id="PTHR48078">
    <property type="entry name" value="THREONINE DEHYDRATASE, MITOCHONDRIAL-RELATED"/>
    <property type="match status" value="1"/>
</dbReference>
<dbReference type="Pfam" id="PF00291">
    <property type="entry name" value="PALP"/>
    <property type="match status" value="1"/>
</dbReference>
<dbReference type="SUPFAM" id="SSF53686">
    <property type="entry name" value="Tryptophan synthase beta subunit-like PLP-dependent enzymes"/>
    <property type="match status" value="1"/>
</dbReference>
<dbReference type="PROSITE" id="PS00165">
    <property type="entry name" value="DEHYDRATASE_SER_THR"/>
    <property type="match status" value="1"/>
</dbReference>
<evidence type="ECO:0000255" key="1">
    <source>
        <dbReference type="HAMAP-Rule" id="MF_01030"/>
    </source>
</evidence>
<name>SDHD_SALDC</name>
<gene>
    <name evidence="1" type="primary">dsdA</name>
    <name type="ordered locus">SeD_A4190</name>
</gene>
<reference key="1">
    <citation type="journal article" date="2011" name="J. Bacteriol.">
        <title>Comparative genomics of 28 Salmonella enterica isolates: evidence for CRISPR-mediated adaptive sublineage evolution.</title>
        <authorList>
            <person name="Fricke W.F."/>
            <person name="Mammel M.K."/>
            <person name="McDermott P.F."/>
            <person name="Tartera C."/>
            <person name="White D.G."/>
            <person name="Leclerc J.E."/>
            <person name="Ravel J."/>
            <person name="Cebula T.A."/>
        </authorList>
    </citation>
    <scope>NUCLEOTIDE SEQUENCE [LARGE SCALE GENOMIC DNA]</scope>
    <source>
        <strain>CT_02021853</strain>
    </source>
</reference>
<sequence>MENIQKLIARYPLVEDLVALKETTWFNPGATSLAQGLPYVGLTEQDVNAAHDRLARFAPYLAKAFPQTAAAGGMIESDVVAIPAMQKRLEKEYGQTINGEMLLKKDSHLAISGSIKARGGIYEVLTHAEKLALEAGLLTTDDDYSVLLSPEFKQFFSQYSIAVGSTGNLGLSIGIMSACIGFKVTVHMSADARAWKKAKLRSHGVTVVEYEDDYGVAVEQGRKAAQSDPNCFFIDDENSRTLFLGYAVAGQRLKAQFAQQGRVVDASHPLFVYLPCGVGGGPGGVAFGLKLAFGDNVHCFFAEPTHSPCMLLGVYTGLHDAISVQDIGIDNLTAADGLAVGRASGFVGRAMERLLDGLYTLDDQTMYDMLGWLAQEEGIRLEPSALAGMAGPQRICAAAAYQQRHGFSQTQLGNATHLVWATGGGMVPEDEMEQYLAKGR</sequence>
<keyword id="KW-0456">Lyase</keyword>
<keyword id="KW-0663">Pyridoxal phosphate</keyword>
<feature type="chain" id="PRO_1000197945" description="D-serine dehydratase">
    <location>
        <begin position="1"/>
        <end position="440"/>
    </location>
</feature>
<feature type="modified residue" description="N6-(pyridoxal phosphate)lysine" evidence="1">
    <location>
        <position position="116"/>
    </location>
</feature>
<protein>
    <recommendedName>
        <fullName evidence="1">D-serine dehydratase</fullName>
        <ecNumber evidence="1">4.3.1.18</ecNumber>
    </recommendedName>
    <alternativeName>
        <fullName evidence="1">D-serine deaminase</fullName>
        <shortName evidence="1">DSD</shortName>
    </alternativeName>
</protein>
<accession>B5FMC1</accession>
<organism>
    <name type="scientific">Salmonella dublin (strain CT_02021853)</name>
    <dbReference type="NCBI Taxonomy" id="439851"/>
    <lineage>
        <taxon>Bacteria</taxon>
        <taxon>Pseudomonadati</taxon>
        <taxon>Pseudomonadota</taxon>
        <taxon>Gammaproteobacteria</taxon>
        <taxon>Enterobacterales</taxon>
        <taxon>Enterobacteriaceae</taxon>
        <taxon>Salmonella</taxon>
    </lineage>
</organism>
<comment type="catalytic activity">
    <reaction evidence="1">
        <text>D-serine = pyruvate + NH4(+)</text>
        <dbReference type="Rhea" id="RHEA:13977"/>
        <dbReference type="ChEBI" id="CHEBI:15361"/>
        <dbReference type="ChEBI" id="CHEBI:28938"/>
        <dbReference type="ChEBI" id="CHEBI:35247"/>
        <dbReference type="EC" id="4.3.1.18"/>
    </reaction>
</comment>
<comment type="cofactor">
    <cofactor evidence="1">
        <name>pyridoxal 5'-phosphate</name>
        <dbReference type="ChEBI" id="CHEBI:597326"/>
    </cofactor>
</comment>
<comment type="subunit">
    <text evidence="1">Monomer.</text>
</comment>
<comment type="similarity">
    <text evidence="1">Belongs to the serine/threonine dehydratase family. DsdA subfamily.</text>
</comment>
<proteinExistence type="inferred from homology"/>